<comment type="function">
    <text evidence="1">Component of the PAN1 actin cytoskeleton-regulatory complex required for the internalization of endosomes during actin-coupled endocytosis. The complex links the site of endocytosis to the cell membrane-associated actin cytoskeleton. Mediates uptake of external molecules and vacuolar degradation of plasma membrane proteins. Plays a role in the proper organization of the cell membrane-associated actin cytoskeleton and promotes its destabilization (By similarity).</text>
</comment>
<comment type="subunit">
    <text evidence="1">Component of the PAN1 actin cytoskeleton-regulatory complex.</text>
</comment>
<comment type="subcellular location">
    <subcellularLocation>
        <location evidence="1">Cell membrane</location>
        <topology evidence="1">Peripheral membrane protein</topology>
        <orientation evidence="1">Cytoplasmic side</orientation>
    </subcellularLocation>
    <subcellularLocation>
        <location evidence="1">Endosome membrane</location>
        <topology evidence="1">Peripheral membrane protein</topology>
        <orientation evidence="1">Cytoplasmic side</orientation>
    </subcellularLocation>
    <subcellularLocation>
        <location evidence="1">Cytoplasm</location>
        <location evidence="1">Cytoskeleton</location>
        <location evidence="1">Actin patch</location>
    </subcellularLocation>
    <text evidence="1">Cytoplasmic and cortical actin patches.</text>
</comment>
<comment type="similarity">
    <text evidence="6">Belongs to the END3 family.</text>
</comment>
<accession>A1CPG1</accession>
<organism>
    <name type="scientific">Aspergillus clavatus (strain ATCC 1007 / CBS 513.65 / DSM 816 / NCTC 3887 / NRRL 1 / QM 1276 / 107)</name>
    <dbReference type="NCBI Taxonomy" id="344612"/>
    <lineage>
        <taxon>Eukaryota</taxon>
        <taxon>Fungi</taxon>
        <taxon>Dikarya</taxon>
        <taxon>Ascomycota</taxon>
        <taxon>Pezizomycotina</taxon>
        <taxon>Eurotiomycetes</taxon>
        <taxon>Eurotiomycetidae</taxon>
        <taxon>Eurotiales</taxon>
        <taxon>Aspergillaceae</taxon>
        <taxon>Aspergillus</taxon>
        <taxon>Aspergillus subgen. Fumigati</taxon>
    </lineage>
</organism>
<sequence length="404" mass="46385">MSTKKIEQWEIERYWEIFASLSNGQPHLNSSQAASVLRNSRLRDEQLEKVWDLADVDGDGELDFEEFCVAMRLVFDLVNGELQEVPRVLPDWLVPESKAHLVQAGRALSGRPEQFERIEDEDDTPGLKDGFDWYMNPADKSKYEEIYSANRNHRGEVTFESLQGLYDSLDVPDTDVRSAWNLVNPSASPAINKDATLAFLHILNYRHEGFRIPRTIPASLRASFENNKIDYQVDNARPAQKWGADGSTETLTGRKTKFGDTYLSRLGVGGKGSYTPKGTDFSDTIQDEEWEKVRLRRELAEMEAKLDAANKASEGRRDRPRNDGRPNWVLIKKEALQLLEYKERELRELREGTGRAKEGQDLERLRDDIKTVGDQVEGLKAHLAERKDVLADVRRQIEEERLHR</sequence>
<keyword id="KW-0009">Actin-binding</keyword>
<keyword id="KW-0106">Calcium</keyword>
<keyword id="KW-1003">Cell membrane</keyword>
<keyword id="KW-0175">Coiled coil</keyword>
<keyword id="KW-0963">Cytoplasm</keyword>
<keyword id="KW-0206">Cytoskeleton</keyword>
<keyword id="KW-0254">Endocytosis</keyword>
<keyword id="KW-0967">Endosome</keyword>
<keyword id="KW-0472">Membrane</keyword>
<keyword id="KW-0479">Metal-binding</keyword>
<keyword id="KW-1185">Reference proteome</keyword>
<keyword id="KW-0677">Repeat</keyword>
<reference key="1">
    <citation type="journal article" date="2008" name="PLoS Genet.">
        <title>Genomic islands in the pathogenic filamentous fungus Aspergillus fumigatus.</title>
        <authorList>
            <person name="Fedorova N.D."/>
            <person name="Khaldi N."/>
            <person name="Joardar V.S."/>
            <person name="Maiti R."/>
            <person name="Amedeo P."/>
            <person name="Anderson M.J."/>
            <person name="Crabtree J."/>
            <person name="Silva J.C."/>
            <person name="Badger J.H."/>
            <person name="Albarraq A."/>
            <person name="Angiuoli S."/>
            <person name="Bussey H."/>
            <person name="Bowyer P."/>
            <person name="Cotty P.J."/>
            <person name="Dyer P.S."/>
            <person name="Egan A."/>
            <person name="Galens K."/>
            <person name="Fraser-Liggett C.M."/>
            <person name="Haas B.J."/>
            <person name="Inman J.M."/>
            <person name="Kent R."/>
            <person name="Lemieux S."/>
            <person name="Malavazi I."/>
            <person name="Orvis J."/>
            <person name="Roemer T."/>
            <person name="Ronning C.M."/>
            <person name="Sundaram J.P."/>
            <person name="Sutton G."/>
            <person name="Turner G."/>
            <person name="Venter J.C."/>
            <person name="White O.R."/>
            <person name="Whitty B.R."/>
            <person name="Youngman P."/>
            <person name="Wolfe K.H."/>
            <person name="Goldman G.H."/>
            <person name="Wortman J.R."/>
            <person name="Jiang B."/>
            <person name="Denning D.W."/>
            <person name="Nierman W.C."/>
        </authorList>
    </citation>
    <scope>NUCLEOTIDE SEQUENCE [LARGE SCALE GENOMIC DNA]</scope>
    <source>
        <strain>ATCC 1007 / CBS 513.65 / DSM 816 / NCTC 3887 / NRRL 1 / QM 1276 / 107</strain>
    </source>
</reference>
<feature type="chain" id="PRO_0000349436" description="Actin cytoskeleton-regulatory complex protein end3">
    <location>
        <begin position="1"/>
        <end position="404"/>
    </location>
</feature>
<feature type="domain" description="EH 1" evidence="3">
    <location>
        <begin position="10"/>
        <end position="100"/>
    </location>
</feature>
<feature type="domain" description="EF-hand" evidence="4">
    <location>
        <begin position="42"/>
        <end position="77"/>
    </location>
</feature>
<feature type="domain" description="EH 2" evidence="3">
    <location>
        <begin position="139"/>
        <end position="227"/>
    </location>
</feature>
<feature type="region of interest" description="Disordered" evidence="5">
    <location>
        <begin position="306"/>
        <end position="325"/>
    </location>
</feature>
<feature type="coiled-coil region" evidence="2">
    <location>
        <begin position="280"/>
        <end position="399"/>
    </location>
</feature>
<feature type="compositionally biased region" description="Basic and acidic residues" evidence="5">
    <location>
        <begin position="306"/>
        <end position="324"/>
    </location>
</feature>
<feature type="binding site" evidence="4">
    <location>
        <position position="55"/>
    </location>
    <ligand>
        <name>Ca(2+)</name>
        <dbReference type="ChEBI" id="CHEBI:29108"/>
    </ligand>
</feature>
<feature type="binding site" evidence="4">
    <location>
        <position position="57"/>
    </location>
    <ligand>
        <name>Ca(2+)</name>
        <dbReference type="ChEBI" id="CHEBI:29108"/>
    </ligand>
</feature>
<feature type="binding site" evidence="4">
    <location>
        <position position="59"/>
    </location>
    <ligand>
        <name>Ca(2+)</name>
        <dbReference type="ChEBI" id="CHEBI:29108"/>
    </ligand>
</feature>
<feature type="binding site" evidence="4">
    <location>
        <position position="61"/>
    </location>
    <ligand>
        <name>Ca(2+)</name>
        <dbReference type="ChEBI" id="CHEBI:29108"/>
    </ligand>
</feature>
<feature type="binding site" evidence="4">
    <location>
        <position position="66"/>
    </location>
    <ligand>
        <name>Ca(2+)</name>
        <dbReference type="ChEBI" id="CHEBI:29108"/>
    </ligand>
</feature>
<gene>
    <name type="primary">end3</name>
    <name type="synonym">sagA</name>
    <name type="ORF">ACLA_022460</name>
</gene>
<evidence type="ECO:0000250" key="1"/>
<evidence type="ECO:0000255" key="2"/>
<evidence type="ECO:0000255" key="3">
    <source>
        <dbReference type="PROSITE-ProRule" id="PRU00077"/>
    </source>
</evidence>
<evidence type="ECO:0000255" key="4">
    <source>
        <dbReference type="PROSITE-ProRule" id="PRU00448"/>
    </source>
</evidence>
<evidence type="ECO:0000256" key="5">
    <source>
        <dbReference type="SAM" id="MobiDB-lite"/>
    </source>
</evidence>
<evidence type="ECO:0000305" key="6"/>
<proteinExistence type="inferred from homology"/>
<name>END3_ASPCL</name>
<protein>
    <recommendedName>
        <fullName>Actin cytoskeleton-regulatory complex protein end3</fullName>
    </recommendedName>
    <alternativeName>
        <fullName>Cytoskeletal adapter protein sagA</fullName>
    </alternativeName>
    <alternativeName>
        <fullName>Endocytosis protein 3</fullName>
    </alternativeName>
</protein>
<dbReference type="EMBL" id="DS027059">
    <property type="protein sequence ID" value="EAW07532.1"/>
    <property type="molecule type" value="Genomic_DNA"/>
</dbReference>
<dbReference type="RefSeq" id="XP_001268958.1">
    <property type="nucleotide sequence ID" value="XM_001268957.1"/>
</dbReference>
<dbReference type="STRING" id="344612.A1CPG1"/>
<dbReference type="EnsemblFungi" id="EAW07532">
    <property type="protein sequence ID" value="EAW07532"/>
    <property type="gene ID" value="ACLA_022460"/>
</dbReference>
<dbReference type="GeneID" id="4701465"/>
<dbReference type="KEGG" id="act:ACLA_022460"/>
<dbReference type="VEuPathDB" id="FungiDB:ACLA_022460"/>
<dbReference type="eggNOG" id="KOG0998">
    <property type="taxonomic scope" value="Eukaryota"/>
</dbReference>
<dbReference type="HOGENOM" id="CLU_040829_0_0_1"/>
<dbReference type="OMA" id="DWLIPES"/>
<dbReference type="OrthoDB" id="1716625at2759"/>
<dbReference type="Proteomes" id="UP000006701">
    <property type="component" value="Unassembled WGS sequence"/>
</dbReference>
<dbReference type="GO" id="GO:0030479">
    <property type="term" value="C:actin cortical patch"/>
    <property type="evidence" value="ECO:0007669"/>
    <property type="project" value="UniProtKB-SubCell"/>
</dbReference>
<dbReference type="GO" id="GO:0010008">
    <property type="term" value="C:endosome membrane"/>
    <property type="evidence" value="ECO:0007669"/>
    <property type="project" value="UniProtKB-SubCell"/>
</dbReference>
<dbReference type="GO" id="GO:0005886">
    <property type="term" value="C:plasma membrane"/>
    <property type="evidence" value="ECO:0007669"/>
    <property type="project" value="UniProtKB-SubCell"/>
</dbReference>
<dbReference type="GO" id="GO:0003779">
    <property type="term" value="F:actin binding"/>
    <property type="evidence" value="ECO:0007669"/>
    <property type="project" value="UniProtKB-KW"/>
</dbReference>
<dbReference type="GO" id="GO:0005509">
    <property type="term" value="F:calcium ion binding"/>
    <property type="evidence" value="ECO:0007669"/>
    <property type="project" value="InterPro"/>
</dbReference>
<dbReference type="GO" id="GO:0007015">
    <property type="term" value="P:actin filament organization"/>
    <property type="evidence" value="ECO:0007669"/>
    <property type="project" value="InterPro"/>
</dbReference>
<dbReference type="GO" id="GO:0006897">
    <property type="term" value="P:endocytosis"/>
    <property type="evidence" value="ECO:0007669"/>
    <property type="project" value="UniProtKB-KW"/>
</dbReference>
<dbReference type="GO" id="GO:0016197">
    <property type="term" value="P:endosomal transport"/>
    <property type="evidence" value="ECO:0007669"/>
    <property type="project" value="TreeGrafter"/>
</dbReference>
<dbReference type="CDD" id="cd00052">
    <property type="entry name" value="EH"/>
    <property type="match status" value="1"/>
</dbReference>
<dbReference type="FunFam" id="1.10.238.10:FF:000339">
    <property type="entry name" value="Actin cytoskeleton-regulatory complex protein END3"/>
    <property type="match status" value="1"/>
</dbReference>
<dbReference type="FunFam" id="1.10.238.10:FF:000323">
    <property type="entry name" value="Actin cytoskeleton-regulatory complex protein end3"/>
    <property type="match status" value="1"/>
</dbReference>
<dbReference type="Gene3D" id="1.10.238.10">
    <property type="entry name" value="EF-hand"/>
    <property type="match status" value="2"/>
</dbReference>
<dbReference type="InterPro" id="IPR011992">
    <property type="entry name" value="EF-hand-dom_pair"/>
</dbReference>
<dbReference type="InterPro" id="IPR018247">
    <property type="entry name" value="EF_Hand_1_Ca_BS"/>
</dbReference>
<dbReference type="InterPro" id="IPR002048">
    <property type="entry name" value="EF_hand_dom"/>
</dbReference>
<dbReference type="InterPro" id="IPR000261">
    <property type="entry name" value="EH_dom"/>
</dbReference>
<dbReference type="InterPro" id="IPR025604">
    <property type="entry name" value="End3"/>
</dbReference>
<dbReference type="PANTHER" id="PTHR11216">
    <property type="entry name" value="EH DOMAIN"/>
    <property type="match status" value="1"/>
</dbReference>
<dbReference type="Pfam" id="PF12763">
    <property type="entry name" value="EH"/>
    <property type="match status" value="1"/>
</dbReference>
<dbReference type="Pfam" id="PF12761">
    <property type="entry name" value="End3"/>
    <property type="match status" value="1"/>
</dbReference>
<dbReference type="SMART" id="SM00054">
    <property type="entry name" value="EFh"/>
    <property type="match status" value="1"/>
</dbReference>
<dbReference type="SMART" id="SM00027">
    <property type="entry name" value="EH"/>
    <property type="match status" value="2"/>
</dbReference>
<dbReference type="SUPFAM" id="SSF47473">
    <property type="entry name" value="EF-hand"/>
    <property type="match status" value="2"/>
</dbReference>
<dbReference type="PROSITE" id="PS00018">
    <property type="entry name" value="EF_HAND_1"/>
    <property type="match status" value="1"/>
</dbReference>
<dbReference type="PROSITE" id="PS50222">
    <property type="entry name" value="EF_HAND_2"/>
    <property type="match status" value="1"/>
</dbReference>
<dbReference type="PROSITE" id="PS50031">
    <property type="entry name" value="EH"/>
    <property type="match status" value="2"/>
</dbReference>